<dbReference type="EC" id="1.4.4.2" evidence="1"/>
<dbReference type="EMBL" id="LT708304">
    <property type="protein sequence ID" value="SIU00467.1"/>
    <property type="molecule type" value="Genomic_DNA"/>
</dbReference>
<dbReference type="RefSeq" id="NP_855515.1">
    <property type="nucleotide sequence ID" value="NC_002945.3"/>
</dbReference>
<dbReference type="RefSeq" id="WP_010950613.1">
    <property type="nucleotide sequence ID" value="NC_002945.4"/>
</dbReference>
<dbReference type="SMR" id="Q7VET8"/>
<dbReference type="KEGG" id="mbo:BQ2027_MB1863"/>
<dbReference type="PATRIC" id="fig|233413.5.peg.2042"/>
<dbReference type="Proteomes" id="UP000001419">
    <property type="component" value="Chromosome"/>
</dbReference>
<dbReference type="GO" id="GO:0005829">
    <property type="term" value="C:cytosol"/>
    <property type="evidence" value="ECO:0007669"/>
    <property type="project" value="TreeGrafter"/>
</dbReference>
<dbReference type="GO" id="GO:0005960">
    <property type="term" value="C:glycine cleavage complex"/>
    <property type="evidence" value="ECO:0007669"/>
    <property type="project" value="TreeGrafter"/>
</dbReference>
<dbReference type="GO" id="GO:0016594">
    <property type="term" value="F:glycine binding"/>
    <property type="evidence" value="ECO:0007669"/>
    <property type="project" value="TreeGrafter"/>
</dbReference>
<dbReference type="GO" id="GO:0004375">
    <property type="term" value="F:glycine dehydrogenase (decarboxylating) activity"/>
    <property type="evidence" value="ECO:0007669"/>
    <property type="project" value="UniProtKB-EC"/>
</dbReference>
<dbReference type="GO" id="GO:0030170">
    <property type="term" value="F:pyridoxal phosphate binding"/>
    <property type="evidence" value="ECO:0007669"/>
    <property type="project" value="TreeGrafter"/>
</dbReference>
<dbReference type="GO" id="GO:0019464">
    <property type="term" value="P:glycine decarboxylation via glycine cleavage system"/>
    <property type="evidence" value="ECO:0007669"/>
    <property type="project" value="UniProtKB-UniRule"/>
</dbReference>
<dbReference type="CDD" id="cd00613">
    <property type="entry name" value="GDC-P"/>
    <property type="match status" value="2"/>
</dbReference>
<dbReference type="FunFam" id="3.90.1150.10:FF:000059">
    <property type="entry name" value="Glycine dehydrogenase (decarboxylating)"/>
    <property type="match status" value="1"/>
</dbReference>
<dbReference type="FunFam" id="3.40.640.10:FF:000005">
    <property type="entry name" value="Glycine dehydrogenase (decarboxylating), mitochondrial"/>
    <property type="match status" value="1"/>
</dbReference>
<dbReference type="FunFam" id="3.40.640.10:FF:000007">
    <property type="entry name" value="glycine dehydrogenase (Decarboxylating), mitochondrial"/>
    <property type="match status" value="1"/>
</dbReference>
<dbReference type="Gene3D" id="3.90.1150.10">
    <property type="entry name" value="Aspartate Aminotransferase, domain 1"/>
    <property type="match status" value="2"/>
</dbReference>
<dbReference type="Gene3D" id="3.40.640.10">
    <property type="entry name" value="Type I PLP-dependent aspartate aminotransferase-like (Major domain)"/>
    <property type="match status" value="2"/>
</dbReference>
<dbReference type="HAMAP" id="MF_00711">
    <property type="entry name" value="GcvP"/>
    <property type="match status" value="1"/>
</dbReference>
<dbReference type="InterPro" id="IPR003437">
    <property type="entry name" value="GcvP"/>
</dbReference>
<dbReference type="InterPro" id="IPR049316">
    <property type="entry name" value="GDC-P_C"/>
</dbReference>
<dbReference type="InterPro" id="IPR049315">
    <property type="entry name" value="GDC-P_N"/>
</dbReference>
<dbReference type="InterPro" id="IPR020581">
    <property type="entry name" value="GDC_P"/>
</dbReference>
<dbReference type="InterPro" id="IPR015424">
    <property type="entry name" value="PyrdxlP-dep_Trfase"/>
</dbReference>
<dbReference type="InterPro" id="IPR015421">
    <property type="entry name" value="PyrdxlP-dep_Trfase_major"/>
</dbReference>
<dbReference type="InterPro" id="IPR015422">
    <property type="entry name" value="PyrdxlP-dep_Trfase_small"/>
</dbReference>
<dbReference type="NCBIfam" id="TIGR00461">
    <property type="entry name" value="gcvP"/>
    <property type="match status" value="1"/>
</dbReference>
<dbReference type="PANTHER" id="PTHR11773:SF1">
    <property type="entry name" value="GLYCINE DEHYDROGENASE (DECARBOXYLATING), MITOCHONDRIAL"/>
    <property type="match status" value="1"/>
</dbReference>
<dbReference type="PANTHER" id="PTHR11773">
    <property type="entry name" value="GLYCINE DEHYDROGENASE, DECARBOXYLATING"/>
    <property type="match status" value="1"/>
</dbReference>
<dbReference type="Pfam" id="PF21478">
    <property type="entry name" value="GcvP2_C"/>
    <property type="match status" value="1"/>
</dbReference>
<dbReference type="Pfam" id="PF02347">
    <property type="entry name" value="GDC-P"/>
    <property type="match status" value="2"/>
</dbReference>
<dbReference type="SUPFAM" id="SSF53383">
    <property type="entry name" value="PLP-dependent transferases"/>
    <property type="match status" value="2"/>
</dbReference>
<reference key="1">
    <citation type="journal article" date="2003" name="Proc. Natl. Acad. Sci. U.S.A.">
        <title>The complete genome sequence of Mycobacterium bovis.</title>
        <authorList>
            <person name="Garnier T."/>
            <person name="Eiglmeier K."/>
            <person name="Camus J.-C."/>
            <person name="Medina N."/>
            <person name="Mansoor H."/>
            <person name="Pryor M."/>
            <person name="Duthoy S."/>
            <person name="Grondin S."/>
            <person name="Lacroix C."/>
            <person name="Monsempe C."/>
            <person name="Simon S."/>
            <person name="Harris B."/>
            <person name="Atkin R."/>
            <person name="Doggett J."/>
            <person name="Mayes R."/>
            <person name="Keating L."/>
            <person name="Wheeler P.R."/>
            <person name="Parkhill J."/>
            <person name="Barrell B.G."/>
            <person name="Cole S.T."/>
            <person name="Gordon S.V."/>
            <person name="Hewinson R.G."/>
        </authorList>
    </citation>
    <scope>NUCLEOTIDE SEQUENCE [LARGE SCALE GENOMIC DNA]</scope>
    <source>
        <strain>ATCC BAA-935 / AF2122/97</strain>
    </source>
</reference>
<reference key="2">
    <citation type="journal article" date="2017" name="Genome Announc.">
        <title>Updated reference genome sequence and annotation of Mycobacterium bovis AF2122/97.</title>
        <authorList>
            <person name="Malone K.M."/>
            <person name="Farrell D."/>
            <person name="Stuber T.P."/>
            <person name="Schubert O.T."/>
            <person name="Aebersold R."/>
            <person name="Robbe-Austerman S."/>
            <person name="Gordon S.V."/>
        </authorList>
    </citation>
    <scope>NUCLEOTIDE SEQUENCE [LARGE SCALE GENOMIC DNA]</scope>
    <scope>GENOME REANNOTATION</scope>
    <source>
        <strain>ATCC BAA-935 / AF2122/97</strain>
    </source>
</reference>
<sequence>MSDHSTFADRHIGLDSQAVATMLAVIGVDSLDDLAVKAVPAGILDTLTDTGAAPGLDSLPPAASEAEALAELRALADANTVAVSMIGQGYYDTHTPPVLLRNIIENPAWYTAYTPYQPEISQGRLEALLNFQTLVTDLTGLEIANASMLDEGTAAAEAMTLMHRAARGPVKRVVVDADVFTQTAAVLATRAKPLGIEIVTADLRAGLPDGEFFGAIAQLPGASGRITDWSALVQQAHDRGALVAVGADLLALTLIAPPGEIGADVAFGTTQRFGVPMGFGGPHAGYLAVHAKHARQLPGRLVGVSVDSDGTPAYRLALQTREQHIRRDKATSNICTAQVLLAVLAAMYASYHGAGGLTAIARRVHAHAEAIAGALGDALVHDKYFDTVLARVPGRADEVLARAKANGINLWRVDADHVSVACDEATTDTHVAVVLDAFGVAAAAPAHADIATRTSEFLTHPAFTQYRTETSMMRYLRALADKDIALDRSMIPLGSCTMKLNAAAEMESITWPEFGRQHPFAPASDTAGLRQLVADLQSWLVLITGYDAVSLQPNAGSQGEYAGLLAIHEYHASRGEPHRDICLIPSSAHGTNAASAALAGMRVVVVDCHDNGDVDLDDLRAKVGEHAERLSALMITYPSTHGVYEHDIAEICAAVHDAGGQVYVDGANLNALVGLARPGKFGGDVSHLNLHKTFCIPHGGGGPGVGPVAVRAHLAPFLPGHPFAPELPKGYPVSSAPYGSASILPITWAYIRMMGAEGLRAASLTAITSANYIARRLDEYYPVLYTGENGMVAHECILDLRGITKLTGITVDDVAKRLADYGFHAPTMSFPVAGTLMVEPTESESLAEVDAFCEAMIGIRAEIDKVGAGEWPVDDNPLRGAPHTAQCLLASDWDHPYTREQAAYPLGTAFRPKVWPAVRRIDGAYGDRNLVCSCPPVEAFA</sequence>
<organism>
    <name type="scientific">Mycobacterium bovis (strain ATCC BAA-935 / AF2122/97)</name>
    <dbReference type="NCBI Taxonomy" id="233413"/>
    <lineage>
        <taxon>Bacteria</taxon>
        <taxon>Bacillati</taxon>
        <taxon>Actinomycetota</taxon>
        <taxon>Actinomycetes</taxon>
        <taxon>Mycobacteriales</taxon>
        <taxon>Mycobacteriaceae</taxon>
        <taxon>Mycobacterium</taxon>
        <taxon>Mycobacterium tuberculosis complex</taxon>
    </lineage>
</organism>
<comment type="function">
    <text evidence="1">The glycine cleavage system catalyzes the degradation of glycine. The P protein binds the alpha-amino group of glycine through its pyridoxal phosphate cofactor; CO(2) is released and the remaining methylamine moiety is then transferred to the lipoamide cofactor of the H protein.</text>
</comment>
<comment type="catalytic activity">
    <reaction evidence="1">
        <text>N(6)-[(R)-lipoyl]-L-lysyl-[glycine-cleavage complex H protein] + glycine + H(+) = N(6)-[(R)-S(8)-aminomethyldihydrolipoyl]-L-lysyl-[glycine-cleavage complex H protein] + CO2</text>
        <dbReference type="Rhea" id="RHEA:24304"/>
        <dbReference type="Rhea" id="RHEA-COMP:10494"/>
        <dbReference type="Rhea" id="RHEA-COMP:10495"/>
        <dbReference type="ChEBI" id="CHEBI:15378"/>
        <dbReference type="ChEBI" id="CHEBI:16526"/>
        <dbReference type="ChEBI" id="CHEBI:57305"/>
        <dbReference type="ChEBI" id="CHEBI:83099"/>
        <dbReference type="ChEBI" id="CHEBI:83143"/>
        <dbReference type="EC" id="1.4.4.2"/>
    </reaction>
</comment>
<comment type="cofactor">
    <cofactor evidence="1">
        <name>pyridoxal 5'-phosphate</name>
        <dbReference type="ChEBI" id="CHEBI:597326"/>
    </cofactor>
</comment>
<comment type="subunit">
    <text evidence="1">The glycine cleavage system is composed of four proteins: P, T, L and H.</text>
</comment>
<comment type="similarity">
    <text evidence="1">Belongs to the GcvP family.</text>
</comment>
<evidence type="ECO:0000255" key="1">
    <source>
        <dbReference type="HAMAP-Rule" id="MF_00711"/>
    </source>
</evidence>
<name>GCSP_MYCBO</name>
<gene>
    <name evidence="1" type="primary">gcvP</name>
    <name type="synonym">gcvB</name>
    <name type="ordered locus">BQ2027_MB1863</name>
</gene>
<proteinExistence type="inferred from homology"/>
<keyword id="KW-0560">Oxidoreductase</keyword>
<keyword id="KW-0663">Pyridoxal phosphate</keyword>
<keyword id="KW-1185">Reference proteome</keyword>
<protein>
    <recommendedName>
        <fullName evidence="1">Glycine dehydrogenase (decarboxylating)</fullName>
        <ecNumber evidence="1">1.4.4.2</ecNumber>
    </recommendedName>
    <alternativeName>
        <fullName evidence="1">Glycine cleavage system P-protein</fullName>
    </alternativeName>
    <alternativeName>
        <fullName evidence="1">Glycine decarboxylase</fullName>
    </alternativeName>
    <alternativeName>
        <fullName evidence="1">Glycine dehydrogenase (aminomethyl-transferring)</fullName>
    </alternativeName>
</protein>
<accession>Q7VET8</accession>
<accession>A0A1R3XZT5</accession>
<accession>X2BIL8</accession>
<feature type="chain" id="PRO_0000166918" description="Glycine dehydrogenase (decarboxylating)">
    <location>
        <begin position="1"/>
        <end position="941"/>
    </location>
</feature>
<feature type="modified residue" description="N6-(pyridoxal phosphate)lysine" evidence="1">
    <location>
        <position position="692"/>
    </location>
</feature>